<protein>
    <recommendedName>
        <fullName evidence="1">Probable glycine dehydrogenase (decarboxylating) subunit 2</fullName>
        <ecNumber evidence="1">1.4.4.2</ecNumber>
    </recommendedName>
    <alternativeName>
        <fullName evidence="1">Glycine cleavage system P-protein subunit 2</fullName>
    </alternativeName>
    <alternativeName>
        <fullName evidence="1">Glycine decarboxylase subunit 2</fullName>
    </alternativeName>
    <alternativeName>
        <fullName evidence="1">Glycine dehydrogenase (aminomethyl-transferring) subunit 2</fullName>
    </alternativeName>
</protein>
<feature type="chain" id="PRO_1000083233" description="Probable glycine dehydrogenase (decarboxylating) subunit 2">
    <location>
        <begin position="1"/>
        <end position="490"/>
    </location>
</feature>
<feature type="modified residue" description="N6-(pyridoxal phosphate)lysine" evidence="1">
    <location>
        <position position="273"/>
    </location>
</feature>
<name>GCSPB_STAA9</name>
<accession>A5IT63</accession>
<dbReference type="EC" id="1.4.4.2" evidence="1"/>
<dbReference type="EMBL" id="CP000703">
    <property type="protein sequence ID" value="ABQ49386.1"/>
    <property type="molecule type" value="Genomic_DNA"/>
</dbReference>
<dbReference type="RefSeq" id="WP_000202188.1">
    <property type="nucleotide sequence ID" value="NC_009487.1"/>
</dbReference>
<dbReference type="SMR" id="A5IT63"/>
<dbReference type="KEGG" id="saj:SaurJH9_1593"/>
<dbReference type="HOGENOM" id="CLU_004620_5_0_9"/>
<dbReference type="GO" id="GO:0005829">
    <property type="term" value="C:cytosol"/>
    <property type="evidence" value="ECO:0007669"/>
    <property type="project" value="TreeGrafter"/>
</dbReference>
<dbReference type="GO" id="GO:0005960">
    <property type="term" value="C:glycine cleavage complex"/>
    <property type="evidence" value="ECO:0007669"/>
    <property type="project" value="TreeGrafter"/>
</dbReference>
<dbReference type="GO" id="GO:0016594">
    <property type="term" value="F:glycine binding"/>
    <property type="evidence" value="ECO:0007669"/>
    <property type="project" value="TreeGrafter"/>
</dbReference>
<dbReference type="GO" id="GO:0004375">
    <property type="term" value="F:glycine dehydrogenase (decarboxylating) activity"/>
    <property type="evidence" value="ECO:0007669"/>
    <property type="project" value="UniProtKB-EC"/>
</dbReference>
<dbReference type="GO" id="GO:0030170">
    <property type="term" value="F:pyridoxal phosphate binding"/>
    <property type="evidence" value="ECO:0007669"/>
    <property type="project" value="TreeGrafter"/>
</dbReference>
<dbReference type="GO" id="GO:0019464">
    <property type="term" value="P:glycine decarboxylation via glycine cleavage system"/>
    <property type="evidence" value="ECO:0007669"/>
    <property type="project" value="UniProtKB-UniRule"/>
</dbReference>
<dbReference type="CDD" id="cd00613">
    <property type="entry name" value="GDC-P"/>
    <property type="match status" value="1"/>
</dbReference>
<dbReference type="FunFam" id="3.40.640.10:FF:000034">
    <property type="entry name" value="Probable glycine dehydrogenase (decarboxylating) subunit 2"/>
    <property type="match status" value="1"/>
</dbReference>
<dbReference type="FunFam" id="3.90.1150.10:FF:000014">
    <property type="entry name" value="Probable glycine dehydrogenase (decarboxylating) subunit 2"/>
    <property type="match status" value="1"/>
</dbReference>
<dbReference type="Gene3D" id="6.20.440.10">
    <property type="match status" value="1"/>
</dbReference>
<dbReference type="Gene3D" id="3.90.1150.10">
    <property type="entry name" value="Aspartate Aminotransferase, domain 1"/>
    <property type="match status" value="1"/>
</dbReference>
<dbReference type="Gene3D" id="3.40.640.10">
    <property type="entry name" value="Type I PLP-dependent aspartate aminotransferase-like (Major domain)"/>
    <property type="match status" value="1"/>
</dbReference>
<dbReference type="HAMAP" id="MF_00713">
    <property type="entry name" value="GcvPB"/>
    <property type="match status" value="1"/>
</dbReference>
<dbReference type="InterPro" id="IPR000192">
    <property type="entry name" value="Aminotrans_V_dom"/>
</dbReference>
<dbReference type="InterPro" id="IPR023012">
    <property type="entry name" value="GcvPB"/>
</dbReference>
<dbReference type="InterPro" id="IPR049316">
    <property type="entry name" value="GDC-P_C"/>
</dbReference>
<dbReference type="InterPro" id="IPR020581">
    <property type="entry name" value="GDC_P"/>
</dbReference>
<dbReference type="InterPro" id="IPR015424">
    <property type="entry name" value="PyrdxlP-dep_Trfase"/>
</dbReference>
<dbReference type="InterPro" id="IPR015421">
    <property type="entry name" value="PyrdxlP-dep_Trfase_major"/>
</dbReference>
<dbReference type="InterPro" id="IPR015422">
    <property type="entry name" value="PyrdxlP-dep_Trfase_small"/>
</dbReference>
<dbReference type="NCBIfam" id="NF003346">
    <property type="entry name" value="PRK04366.1"/>
    <property type="match status" value="1"/>
</dbReference>
<dbReference type="PANTHER" id="PTHR11773:SF1">
    <property type="entry name" value="GLYCINE DEHYDROGENASE (DECARBOXYLATING), MITOCHONDRIAL"/>
    <property type="match status" value="1"/>
</dbReference>
<dbReference type="PANTHER" id="PTHR11773">
    <property type="entry name" value="GLYCINE DEHYDROGENASE, DECARBOXYLATING"/>
    <property type="match status" value="1"/>
</dbReference>
<dbReference type="Pfam" id="PF00266">
    <property type="entry name" value="Aminotran_5"/>
    <property type="match status" value="1"/>
</dbReference>
<dbReference type="Pfam" id="PF21478">
    <property type="entry name" value="GcvP2_C"/>
    <property type="match status" value="1"/>
</dbReference>
<dbReference type="SUPFAM" id="SSF53383">
    <property type="entry name" value="PLP-dependent transferases"/>
    <property type="match status" value="1"/>
</dbReference>
<sequence length="490" mass="54783">MTSKSSPLIFERSREGRYAYSLPKSDIKTNSVESLLDDKFIRKNKAEFPEVAELDLVRHYTELSNKNFGVDNGFYPLGSCTMKYNPKINEKVARIPGFSESHPLQDEDQVQGSLEIIYSLQEELKEITGMDEVTLQPAAGAHGEWTALMIFKAYHENNGEGHRDEVIVPDSAHGTNPASASFAGFKSVTVKSNERGEVDIDDLKRVVNENTAAIMLTNPNTLGIFEKNIMEIREIVHNAGGLLYYDGANLNAIMDKVRPGDMGFDAVHLNLHKTFTGPHGGGGPGSGPVGVVKELASYLPKPMVIKDGDKFKYDNDIKNSIGRVKPFYGNFGIYLRAYTYIRTMGATGLKEVSEAAVLNANYIKARLSEHFEIPYKQYCKHEFVLSGVRQKEFGVRTLDMAKRLLDFGVHPPTIYFPLNVEEGMMIEPTETESKETLDYFIDTLISIAEEAKNDPDKVLEAPHTTVIDRLDEATAARKPILKFENLKQEK</sequence>
<proteinExistence type="inferred from homology"/>
<gene>
    <name evidence="1" type="primary">gcvPB</name>
    <name type="ordered locus">SaurJH9_1593</name>
</gene>
<organism>
    <name type="scientific">Staphylococcus aureus (strain JH9)</name>
    <dbReference type="NCBI Taxonomy" id="359786"/>
    <lineage>
        <taxon>Bacteria</taxon>
        <taxon>Bacillati</taxon>
        <taxon>Bacillota</taxon>
        <taxon>Bacilli</taxon>
        <taxon>Bacillales</taxon>
        <taxon>Staphylococcaceae</taxon>
        <taxon>Staphylococcus</taxon>
    </lineage>
</organism>
<evidence type="ECO:0000255" key="1">
    <source>
        <dbReference type="HAMAP-Rule" id="MF_00713"/>
    </source>
</evidence>
<comment type="function">
    <text evidence="1">The glycine cleavage system catalyzes the degradation of glycine. The P protein binds the alpha-amino group of glycine through its pyridoxal phosphate cofactor; CO(2) is released and the remaining methylamine moiety is then transferred to the lipoamide cofactor of the H protein.</text>
</comment>
<comment type="catalytic activity">
    <reaction evidence="1">
        <text>N(6)-[(R)-lipoyl]-L-lysyl-[glycine-cleavage complex H protein] + glycine + H(+) = N(6)-[(R)-S(8)-aminomethyldihydrolipoyl]-L-lysyl-[glycine-cleavage complex H protein] + CO2</text>
        <dbReference type="Rhea" id="RHEA:24304"/>
        <dbReference type="Rhea" id="RHEA-COMP:10494"/>
        <dbReference type="Rhea" id="RHEA-COMP:10495"/>
        <dbReference type="ChEBI" id="CHEBI:15378"/>
        <dbReference type="ChEBI" id="CHEBI:16526"/>
        <dbReference type="ChEBI" id="CHEBI:57305"/>
        <dbReference type="ChEBI" id="CHEBI:83099"/>
        <dbReference type="ChEBI" id="CHEBI:83143"/>
        <dbReference type="EC" id="1.4.4.2"/>
    </reaction>
</comment>
<comment type="cofactor">
    <cofactor evidence="1">
        <name>pyridoxal 5'-phosphate</name>
        <dbReference type="ChEBI" id="CHEBI:597326"/>
    </cofactor>
</comment>
<comment type="subunit">
    <text evidence="1">The glycine cleavage system is composed of four proteins: P, T, L and H. In this organism, the P 'protein' is a heterodimer of two subunits.</text>
</comment>
<comment type="similarity">
    <text evidence="1">Belongs to the GcvP family. C-terminal subunit subfamily.</text>
</comment>
<reference key="1">
    <citation type="submission" date="2007-05" db="EMBL/GenBank/DDBJ databases">
        <title>Complete sequence of chromosome of Staphylococcus aureus subsp. aureus JH9.</title>
        <authorList>
            <consortium name="US DOE Joint Genome Institute"/>
            <person name="Copeland A."/>
            <person name="Lucas S."/>
            <person name="Lapidus A."/>
            <person name="Barry K."/>
            <person name="Detter J.C."/>
            <person name="Glavina del Rio T."/>
            <person name="Hammon N."/>
            <person name="Israni S."/>
            <person name="Pitluck S."/>
            <person name="Chain P."/>
            <person name="Malfatti S."/>
            <person name="Shin M."/>
            <person name="Vergez L."/>
            <person name="Schmutz J."/>
            <person name="Larimer F."/>
            <person name="Land M."/>
            <person name="Hauser L."/>
            <person name="Kyrpides N."/>
            <person name="Kim E."/>
            <person name="Tomasz A."/>
            <person name="Richardson P."/>
        </authorList>
    </citation>
    <scope>NUCLEOTIDE SEQUENCE [LARGE SCALE GENOMIC DNA]</scope>
    <source>
        <strain>JH9</strain>
    </source>
</reference>
<keyword id="KW-0560">Oxidoreductase</keyword>
<keyword id="KW-0663">Pyridoxal phosphate</keyword>